<evidence type="ECO:0000255" key="1">
    <source>
        <dbReference type="HAMAP-Rule" id="MF_00074"/>
    </source>
</evidence>
<gene>
    <name evidence="1" type="primary">rsmG</name>
    <name type="ordered locus">Asuc_0334</name>
</gene>
<name>RSMG_ACTSZ</name>
<accession>A6VL65</accession>
<protein>
    <recommendedName>
        <fullName evidence="1">Ribosomal RNA small subunit methyltransferase G</fullName>
        <ecNumber evidence="1">2.1.1.170</ecNumber>
    </recommendedName>
    <alternativeName>
        <fullName evidence="1">16S rRNA 7-methylguanosine methyltransferase</fullName>
        <shortName evidence="1">16S rRNA m7G methyltransferase</shortName>
    </alternativeName>
</protein>
<organism>
    <name type="scientific">Actinobacillus succinogenes (strain ATCC 55618 / DSM 22257 / CCUG 43843 / 130Z)</name>
    <dbReference type="NCBI Taxonomy" id="339671"/>
    <lineage>
        <taxon>Bacteria</taxon>
        <taxon>Pseudomonadati</taxon>
        <taxon>Pseudomonadota</taxon>
        <taxon>Gammaproteobacteria</taxon>
        <taxon>Pasteurellales</taxon>
        <taxon>Pasteurellaceae</taxon>
        <taxon>Actinobacillus</taxon>
    </lineage>
</organism>
<reference key="1">
    <citation type="journal article" date="2010" name="BMC Genomics">
        <title>A genomic perspective on the potential of Actinobacillus succinogenes for industrial succinate production.</title>
        <authorList>
            <person name="McKinlay J.B."/>
            <person name="Laivenieks M."/>
            <person name="Schindler B.D."/>
            <person name="McKinlay A.A."/>
            <person name="Siddaramappa S."/>
            <person name="Challacombe J.F."/>
            <person name="Lowry S.R."/>
            <person name="Clum A."/>
            <person name="Lapidus A.L."/>
            <person name="Burkhart K.B."/>
            <person name="Harkins V."/>
            <person name="Vieille C."/>
        </authorList>
    </citation>
    <scope>NUCLEOTIDE SEQUENCE [LARGE SCALE GENOMIC DNA]</scope>
    <source>
        <strain>ATCC 55618 / DSM 22257 / CCUG 43843 / 130Z</strain>
    </source>
</reference>
<dbReference type="EC" id="2.1.1.170" evidence="1"/>
<dbReference type="EMBL" id="CP000746">
    <property type="protein sequence ID" value="ABR73712.1"/>
    <property type="molecule type" value="Genomic_DNA"/>
</dbReference>
<dbReference type="RefSeq" id="WP_011978987.1">
    <property type="nucleotide sequence ID" value="NC_009655.1"/>
</dbReference>
<dbReference type="SMR" id="A6VL65"/>
<dbReference type="STRING" id="339671.Asuc_0334"/>
<dbReference type="KEGG" id="asu:Asuc_0334"/>
<dbReference type="eggNOG" id="COG0357">
    <property type="taxonomic scope" value="Bacteria"/>
</dbReference>
<dbReference type="HOGENOM" id="CLU_065341_2_0_6"/>
<dbReference type="OrthoDB" id="9808773at2"/>
<dbReference type="Proteomes" id="UP000001114">
    <property type="component" value="Chromosome"/>
</dbReference>
<dbReference type="GO" id="GO:0005829">
    <property type="term" value="C:cytosol"/>
    <property type="evidence" value="ECO:0007669"/>
    <property type="project" value="TreeGrafter"/>
</dbReference>
<dbReference type="GO" id="GO:0070043">
    <property type="term" value="F:rRNA (guanine-N7-)-methyltransferase activity"/>
    <property type="evidence" value="ECO:0007669"/>
    <property type="project" value="UniProtKB-UniRule"/>
</dbReference>
<dbReference type="CDD" id="cd02440">
    <property type="entry name" value="AdoMet_MTases"/>
    <property type="match status" value="1"/>
</dbReference>
<dbReference type="FunFam" id="3.40.50.150:FF:000032">
    <property type="entry name" value="Ribosomal RNA small subunit methyltransferase G"/>
    <property type="match status" value="1"/>
</dbReference>
<dbReference type="Gene3D" id="3.40.50.150">
    <property type="entry name" value="Vaccinia Virus protein VP39"/>
    <property type="match status" value="1"/>
</dbReference>
<dbReference type="HAMAP" id="MF_00074">
    <property type="entry name" value="16SrRNA_methyltr_G"/>
    <property type="match status" value="1"/>
</dbReference>
<dbReference type="InterPro" id="IPR003682">
    <property type="entry name" value="rRNA_ssu_MeTfrase_G"/>
</dbReference>
<dbReference type="InterPro" id="IPR029063">
    <property type="entry name" value="SAM-dependent_MTases_sf"/>
</dbReference>
<dbReference type="NCBIfam" id="TIGR00138">
    <property type="entry name" value="rsmG_gidB"/>
    <property type="match status" value="1"/>
</dbReference>
<dbReference type="PANTHER" id="PTHR31760">
    <property type="entry name" value="S-ADENOSYL-L-METHIONINE-DEPENDENT METHYLTRANSFERASES SUPERFAMILY PROTEIN"/>
    <property type="match status" value="1"/>
</dbReference>
<dbReference type="PANTHER" id="PTHR31760:SF0">
    <property type="entry name" value="S-ADENOSYL-L-METHIONINE-DEPENDENT METHYLTRANSFERASES SUPERFAMILY PROTEIN"/>
    <property type="match status" value="1"/>
</dbReference>
<dbReference type="Pfam" id="PF02527">
    <property type="entry name" value="GidB"/>
    <property type="match status" value="1"/>
</dbReference>
<dbReference type="PIRSF" id="PIRSF003078">
    <property type="entry name" value="GidB"/>
    <property type="match status" value="1"/>
</dbReference>
<dbReference type="SUPFAM" id="SSF53335">
    <property type="entry name" value="S-adenosyl-L-methionine-dependent methyltransferases"/>
    <property type="match status" value="1"/>
</dbReference>
<feature type="chain" id="PRO_1000071195" description="Ribosomal RNA small subunit methyltransferase G">
    <location>
        <begin position="1"/>
        <end position="211"/>
    </location>
</feature>
<feature type="binding site" evidence="1">
    <location>
        <position position="81"/>
    </location>
    <ligand>
        <name>S-adenosyl-L-methionine</name>
        <dbReference type="ChEBI" id="CHEBI:59789"/>
    </ligand>
</feature>
<feature type="binding site" evidence="1">
    <location>
        <position position="86"/>
    </location>
    <ligand>
        <name>S-adenosyl-L-methionine</name>
        <dbReference type="ChEBI" id="CHEBI:59789"/>
    </ligand>
</feature>
<feature type="binding site" evidence="1">
    <location>
        <begin position="132"/>
        <end position="133"/>
    </location>
    <ligand>
        <name>S-adenosyl-L-methionine</name>
        <dbReference type="ChEBI" id="CHEBI:59789"/>
    </ligand>
</feature>
<feature type="binding site" evidence="1">
    <location>
        <position position="147"/>
    </location>
    <ligand>
        <name>S-adenosyl-L-methionine</name>
        <dbReference type="ChEBI" id="CHEBI:59789"/>
    </ligand>
</feature>
<sequence>MANNLEQILREKLEILLQSTALSLSSQQKQQLVKLVLLLNKWNKAYNLTSVRDPQEMLVKHILDSLVVSPYLRGERFIDVGTGPGLPGLPLAIINPDKKFVLLDSLGKRMSFIRNAVRELELTNVEPVLSRVEEYIPDHKFDGVLSRAFASLKDMTDWCSHLPVNNGLFYALKGQYNEDEIKQLDEKFTIQQVIKLDVPELQGKRHLILIK</sequence>
<comment type="function">
    <text evidence="1">Specifically methylates the N7 position of guanine in position 527 of 16S rRNA.</text>
</comment>
<comment type="catalytic activity">
    <reaction evidence="1">
        <text>guanosine(527) in 16S rRNA + S-adenosyl-L-methionine = N(7)-methylguanosine(527) in 16S rRNA + S-adenosyl-L-homocysteine</text>
        <dbReference type="Rhea" id="RHEA:42732"/>
        <dbReference type="Rhea" id="RHEA-COMP:10209"/>
        <dbReference type="Rhea" id="RHEA-COMP:10210"/>
        <dbReference type="ChEBI" id="CHEBI:57856"/>
        <dbReference type="ChEBI" id="CHEBI:59789"/>
        <dbReference type="ChEBI" id="CHEBI:74269"/>
        <dbReference type="ChEBI" id="CHEBI:74480"/>
        <dbReference type="EC" id="2.1.1.170"/>
    </reaction>
</comment>
<comment type="subcellular location">
    <subcellularLocation>
        <location evidence="1">Cytoplasm</location>
    </subcellularLocation>
</comment>
<comment type="similarity">
    <text evidence="1">Belongs to the methyltransferase superfamily. RNA methyltransferase RsmG family.</text>
</comment>
<proteinExistence type="inferred from homology"/>
<keyword id="KW-0963">Cytoplasm</keyword>
<keyword id="KW-0489">Methyltransferase</keyword>
<keyword id="KW-1185">Reference proteome</keyword>
<keyword id="KW-0698">rRNA processing</keyword>
<keyword id="KW-0949">S-adenosyl-L-methionine</keyword>
<keyword id="KW-0808">Transferase</keyword>